<name>PYRR_HAEDU</name>
<feature type="chain" id="PRO_0000183037" description="Bifunctional protein PyrR">
    <location>
        <begin position="1"/>
        <end position="179"/>
    </location>
</feature>
<feature type="short sequence motif" description="PRPP-binding" evidence="2">
    <location>
        <begin position="97"/>
        <end position="109"/>
    </location>
</feature>
<feature type="binding site" evidence="1">
    <location>
        <begin position="39"/>
        <end position="40"/>
    </location>
    <ligand>
        <name>substrate</name>
    </ligand>
</feature>
<feature type="binding site" evidence="1">
    <location>
        <begin position="101"/>
        <end position="109"/>
    </location>
    <ligand>
        <name>substrate</name>
    </ligand>
</feature>
<feature type="binding site" evidence="1">
    <location>
        <position position="134"/>
    </location>
    <ligand>
        <name>substrate</name>
    </ligand>
</feature>
<feature type="binding site" evidence="1">
    <location>
        <position position="158"/>
    </location>
    <ligand>
        <name>substrate</name>
    </ligand>
</feature>
<keyword id="KW-0328">Glycosyltransferase</keyword>
<keyword id="KW-1185">Reference proteome</keyword>
<keyword id="KW-0804">Transcription</keyword>
<keyword id="KW-0805">Transcription regulation</keyword>
<keyword id="KW-0808">Transferase</keyword>
<accession>Q7VM31</accession>
<organism>
    <name type="scientific">Haemophilus ducreyi (strain 35000HP / ATCC 700724)</name>
    <dbReference type="NCBI Taxonomy" id="233412"/>
    <lineage>
        <taxon>Bacteria</taxon>
        <taxon>Pseudomonadati</taxon>
        <taxon>Pseudomonadota</taxon>
        <taxon>Gammaproteobacteria</taxon>
        <taxon>Pasteurellales</taxon>
        <taxon>Pasteurellaceae</taxon>
        <taxon>Haemophilus</taxon>
    </lineage>
</organism>
<protein>
    <recommendedName>
        <fullName evidence="2">Bifunctional protein PyrR</fullName>
    </recommendedName>
    <domain>
        <recommendedName>
            <fullName evidence="2">Pyrimidine operon regulatory protein</fullName>
        </recommendedName>
    </domain>
    <domain>
        <recommendedName>
            <fullName evidence="2">Uracil phosphoribosyltransferase</fullName>
            <shortName evidence="2">UPRTase</shortName>
            <ecNumber evidence="2">2.4.2.9</ecNumber>
        </recommendedName>
    </domain>
</protein>
<evidence type="ECO:0000250" key="1"/>
<evidence type="ECO:0000255" key="2">
    <source>
        <dbReference type="HAMAP-Rule" id="MF_01219"/>
    </source>
</evidence>
<gene>
    <name evidence="2" type="primary">pyrR</name>
    <name type="ordered locus">HD_1181</name>
</gene>
<sequence length="179" mass="20273">MEKIIIDTEQFQRTISRISHQIIEKHAILDNIILVGIKRRGAEIAEMLQKRISELAQISLPLMALDITFYRDDLNLTSKDPVYTGVEHQLNIEGKTVILIDDVLFTGRTIRAALDALLDFGRAKRIELVILVDRGHRELPIRADYVGKNIPTALNEQVQVRTEHYDGVSQVALIHSTNG</sequence>
<proteinExistence type="inferred from homology"/>
<comment type="function">
    <text evidence="2">Regulates the transcription of the pyrimidine nucleotide (pyr) operon in response to exogenous pyrimidines.</text>
</comment>
<comment type="function">
    <text evidence="2">Also displays a weak uracil phosphoribosyltransferase activity which is not physiologically significant.</text>
</comment>
<comment type="catalytic activity">
    <reaction evidence="2">
        <text>UMP + diphosphate = 5-phospho-alpha-D-ribose 1-diphosphate + uracil</text>
        <dbReference type="Rhea" id="RHEA:13017"/>
        <dbReference type="ChEBI" id="CHEBI:17568"/>
        <dbReference type="ChEBI" id="CHEBI:33019"/>
        <dbReference type="ChEBI" id="CHEBI:57865"/>
        <dbReference type="ChEBI" id="CHEBI:58017"/>
        <dbReference type="EC" id="2.4.2.9"/>
    </reaction>
</comment>
<comment type="similarity">
    <text evidence="2">Belongs to the purine/pyrimidine phosphoribosyltransferase family. PyrR subfamily.</text>
</comment>
<reference key="1">
    <citation type="submission" date="2003-06" db="EMBL/GenBank/DDBJ databases">
        <title>The complete genome sequence of Haemophilus ducreyi.</title>
        <authorList>
            <person name="Munson R.S. Jr."/>
            <person name="Ray W.C."/>
            <person name="Mahairas G."/>
            <person name="Sabo P."/>
            <person name="Mungur R."/>
            <person name="Johnson L."/>
            <person name="Nguyen D."/>
            <person name="Wang J."/>
            <person name="Forst C."/>
            <person name="Hood L."/>
        </authorList>
    </citation>
    <scope>NUCLEOTIDE SEQUENCE [LARGE SCALE GENOMIC DNA]</scope>
    <source>
        <strain>35000HP / ATCC 700724</strain>
    </source>
</reference>
<dbReference type="EC" id="2.4.2.9" evidence="2"/>
<dbReference type="EMBL" id="AE017143">
    <property type="protein sequence ID" value="AAP96032.1"/>
    <property type="molecule type" value="Genomic_DNA"/>
</dbReference>
<dbReference type="RefSeq" id="WP_010945081.1">
    <property type="nucleotide sequence ID" value="NC_002940.2"/>
</dbReference>
<dbReference type="SMR" id="Q7VM31"/>
<dbReference type="STRING" id="233412.HD_1181"/>
<dbReference type="KEGG" id="hdu:HD_1181"/>
<dbReference type="eggNOG" id="COG2065">
    <property type="taxonomic scope" value="Bacteria"/>
</dbReference>
<dbReference type="HOGENOM" id="CLU_094234_2_1_6"/>
<dbReference type="OrthoDB" id="9802227at2"/>
<dbReference type="Proteomes" id="UP000001022">
    <property type="component" value="Chromosome"/>
</dbReference>
<dbReference type="GO" id="GO:0004845">
    <property type="term" value="F:uracil phosphoribosyltransferase activity"/>
    <property type="evidence" value="ECO:0007669"/>
    <property type="project" value="UniProtKB-UniRule"/>
</dbReference>
<dbReference type="GO" id="GO:0006355">
    <property type="term" value="P:regulation of DNA-templated transcription"/>
    <property type="evidence" value="ECO:0007669"/>
    <property type="project" value="UniProtKB-UniRule"/>
</dbReference>
<dbReference type="CDD" id="cd06223">
    <property type="entry name" value="PRTases_typeI"/>
    <property type="match status" value="1"/>
</dbReference>
<dbReference type="FunFam" id="3.40.50.2020:FF:000020">
    <property type="entry name" value="Bifunctional protein PyrR"/>
    <property type="match status" value="1"/>
</dbReference>
<dbReference type="Gene3D" id="3.40.50.2020">
    <property type="match status" value="1"/>
</dbReference>
<dbReference type="HAMAP" id="MF_01219">
    <property type="entry name" value="PyrR"/>
    <property type="match status" value="1"/>
</dbReference>
<dbReference type="InterPro" id="IPR000836">
    <property type="entry name" value="PRibTrfase_dom"/>
</dbReference>
<dbReference type="InterPro" id="IPR029057">
    <property type="entry name" value="PRTase-like"/>
</dbReference>
<dbReference type="InterPro" id="IPR023050">
    <property type="entry name" value="PyrR"/>
</dbReference>
<dbReference type="InterPro" id="IPR050137">
    <property type="entry name" value="PyrR_bifunctional"/>
</dbReference>
<dbReference type="NCBIfam" id="NF003549">
    <property type="entry name" value="PRK05205.1-5"/>
    <property type="match status" value="1"/>
</dbReference>
<dbReference type="PANTHER" id="PTHR11608">
    <property type="entry name" value="BIFUNCTIONAL PROTEIN PYRR"/>
    <property type="match status" value="1"/>
</dbReference>
<dbReference type="PANTHER" id="PTHR11608:SF0">
    <property type="entry name" value="BIFUNCTIONAL PROTEIN PYRR"/>
    <property type="match status" value="1"/>
</dbReference>
<dbReference type="Pfam" id="PF00156">
    <property type="entry name" value="Pribosyltran"/>
    <property type="match status" value="1"/>
</dbReference>
<dbReference type="SUPFAM" id="SSF53271">
    <property type="entry name" value="PRTase-like"/>
    <property type="match status" value="1"/>
</dbReference>